<gene>
    <name type="primary">Agfg1</name>
    <name type="synonym">Agfg1-ps1</name>
    <name type="synonym">Hrb</name>
    <name type="synonym">Rip</name>
</gene>
<keyword id="KW-0968">Cytoplasmic vesicle</keyword>
<keyword id="KW-0217">Developmental protein</keyword>
<keyword id="KW-0221">Differentiation</keyword>
<keyword id="KW-0903">Direct protein sequencing</keyword>
<keyword id="KW-0238">DNA-binding</keyword>
<keyword id="KW-0325">Glycoprotein</keyword>
<keyword id="KW-0479">Metal-binding</keyword>
<keyword id="KW-0539">Nucleus</keyword>
<keyword id="KW-0597">Phosphoprotein</keyword>
<keyword id="KW-1185">Reference proteome</keyword>
<keyword id="KW-0677">Repeat</keyword>
<keyword id="KW-0744">Spermatogenesis</keyword>
<keyword id="KW-0813">Transport</keyword>
<keyword id="KW-0862">Zinc</keyword>
<keyword id="KW-0863">Zinc-finger</keyword>
<dbReference type="EMBL" id="BC099202">
    <property type="protein sequence ID" value="AAH99202.1"/>
    <property type="molecule type" value="mRNA"/>
</dbReference>
<dbReference type="RefSeq" id="NP_001129068.1">
    <property type="nucleotide sequence ID" value="NM_001135596.2"/>
</dbReference>
<dbReference type="FunCoup" id="Q4KLH5">
    <property type="interactions" value="2935"/>
</dbReference>
<dbReference type="IntAct" id="Q4KLH5">
    <property type="interactions" value="2"/>
</dbReference>
<dbReference type="STRING" id="10116.ENSRNOP00000021309"/>
<dbReference type="GlyCosmos" id="Q4KLH5">
    <property type="glycosylation" value="1 site, No reported glycans"/>
</dbReference>
<dbReference type="GlyGen" id="Q4KLH5">
    <property type="glycosylation" value="2 sites, 1 O-linked glycan (1 site)"/>
</dbReference>
<dbReference type="iPTMnet" id="Q4KLH5"/>
<dbReference type="PhosphoSitePlus" id="Q4KLH5"/>
<dbReference type="jPOST" id="Q4KLH5"/>
<dbReference type="PaxDb" id="10116-ENSRNOP00000021309"/>
<dbReference type="GeneID" id="363266"/>
<dbReference type="KEGG" id="rno:363266"/>
<dbReference type="AGR" id="RGD:1560041"/>
<dbReference type="CTD" id="3267"/>
<dbReference type="RGD" id="1560041">
    <property type="gene designation" value="Agfg1"/>
</dbReference>
<dbReference type="eggNOG" id="KOG0702">
    <property type="taxonomic scope" value="Eukaryota"/>
</dbReference>
<dbReference type="InParanoid" id="Q4KLH5"/>
<dbReference type="OrthoDB" id="77183at9989"/>
<dbReference type="PhylomeDB" id="Q4KLH5"/>
<dbReference type="Reactome" id="R-RNO-8856825">
    <property type="pathway name" value="Cargo recognition for clathrin-mediated endocytosis"/>
</dbReference>
<dbReference type="Reactome" id="R-RNO-8856828">
    <property type="pathway name" value="Clathrin-mediated endocytosis"/>
</dbReference>
<dbReference type="PRO" id="PR:Q4KLH5"/>
<dbReference type="Proteomes" id="UP000002494">
    <property type="component" value="Unplaced"/>
</dbReference>
<dbReference type="GO" id="GO:0042995">
    <property type="term" value="C:cell projection"/>
    <property type="evidence" value="ECO:0000266"/>
    <property type="project" value="RGD"/>
</dbReference>
<dbReference type="GO" id="GO:0005737">
    <property type="term" value="C:cytoplasm"/>
    <property type="evidence" value="ECO:0000318"/>
    <property type="project" value="GO_Central"/>
</dbReference>
<dbReference type="GO" id="GO:0031410">
    <property type="term" value="C:cytoplasmic vesicle"/>
    <property type="evidence" value="ECO:0000266"/>
    <property type="project" value="RGD"/>
</dbReference>
<dbReference type="GO" id="GO:0043025">
    <property type="term" value="C:neuronal cell body"/>
    <property type="evidence" value="ECO:0000266"/>
    <property type="project" value="RGD"/>
</dbReference>
<dbReference type="GO" id="GO:0005634">
    <property type="term" value="C:nucleus"/>
    <property type="evidence" value="ECO:0007669"/>
    <property type="project" value="UniProtKB-SubCell"/>
</dbReference>
<dbReference type="GO" id="GO:0003677">
    <property type="term" value="F:DNA binding"/>
    <property type="evidence" value="ECO:0007669"/>
    <property type="project" value="UniProtKB-KW"/>
</dbReference>
<dbReference type="GO" id="GO:0005096">
    <property type="term" value="F:GTPase activator activity"/>
    <property type="evidence" value="ECO:0007669"/>
    <property type="project" value="InterPro"/>
</dbReference>
<dbReference type="GO" id="GO:0008270">
    <property type="term" value="F:zinc ion binding"/>
    <property type="evidence" value="ECO:0007669"/>
    <property type="project" value="UniProtKB-KW"/>
</dbReference>
<dbReference type="GO" id="GO:0001675">
    <property type="term" value="P:acrosome assembly"/>
    <property type="evidence" value="ECO:0000266"/>
    <property type="project" value="RGD"/>
</dbReference>
<dbReference type="GO" id="GO:0045109">
    <property type="term" value="P:intermediate filament organization"/>
    <property type="evidence" value="ECO:0000266"/>
    <property type="project" value="RGD"/>
</dbReference>
<dbReference type="GO" id="GO:0007289">
    <property type="term" value="P:spermatid nucleus differentiation"/>
    <property type="evidence" value="ECO:0000266"/>
    <property type="project" value="RGD"/>
</dbReference>
<dbReference type="CDD" id="cd08857">
    <property type="entry name" value="ArfGap_AGFG1"/>
    <property type="match status" value="1"/>
</dbReference>
<dbReference type="FunFam" id="1.10.220.150:FF:000005">
    <property type="entry name" value="Arf-GAP domain and FG repeat-containing protein 1"/>
    <property type="match status" value="1"/>
</dbReference>
<dbReference type="FunFam" id="3.30.450.50:FF:000005">
    <property type="entry name" value="arf-GAP domain and FG repeat-containing protein 1"/>
    <property type="match status" value="1"/>
</dbReference>
<dbReference type="Gene3D" id="1.10.220.150">
    <property type="entry name" value="Arf GTPase activating protein"/>
    <property type="match status" value="1"/>
</dbReference>
<dbReference type="Gene3D" id="3.30.450.50">
    <property type="entry name" value="Longin domain"/>
    <property type="match status" value="1"/>
</dbReference>
<dbReference type="InterPro" id="IPR052248">
    <property type="entry name" value="Arf-GAP_FG-repeat_protein"/>
</dbReference>
<dbReference type="InterPro" id="IPR037278">
    <property type="entry name" value="ARFGAP/RecO"/>
</dbReference>
<dbReference type="InterPro" id="IPR001164">
    <property type="entry name" value="ArfGAP_dom"/>
</dbReference>
<dbReference type="InterPro" id="IPR038508">
    <property type="entry name" value="ArfGAP_dom_sf"/>
</dbReference>
<dbReference type="PANTHER" id="PTHR46134:SF1">
    <property type="entry name" value="ARF-GAP DOMAIN AND FG REPEAT-CONTAINING PROTEIN 1"/>
    <property type="match status" value="1"/>
</dbReference>
<dbReference type="PANTHER" id="PTHR46134">
    <property type="entry name" value="DRONGO, ISOFORM F"/>
    <property type="match status" value="1"/>
</dbReference>
<dbReference type="Pfam" id="PF01412">
    <property type="entry name" value="ArfGap"/>
    <property type="match status" value="1"/>
</dbReference>
<dbReference type="PRINTS" id="PR00405">
    <property type="entry name" value="REVINTRACTNG"/>
</dbReference>
<dbReference type="SMART" id="SM00105">
    <property type="entry name" value="ArfGap"/>
    <property type="match status" value="1"/>
</dbReference>
<dbReference type="SUPFAM" id="SSF57863">
    <property type="entry name" value="ArfGap/RecO-like zinc finger"/>
    <property type="match status" value="1"/>
</dbReference>
<dbReference type="PROSITE" id="PS50115">
    <property type="entry name" value="ARFGAP"/>
    <property type="match status" value="1"/>
</dbReference>
<evidence type="ECO:0000250" key="1"/>
<evidence type="ECO:0000250" key="2">
    <source>
        <dbReference type="UniProtKB" id="P52594"/>
    </source>
</evidence>
<evidence type="ECO:0000255" key="3">
    <source>
        <dbReference type="PROSITE-ProRule" id="PRU00288"/>
    </source>
</evidence>
<evidence type="ECO:0000256" key="4">
    <source>
        <dbReference type="SAM" id="MobiDB-lite"/>
    </source>
</evidence>
<evidence type="ECO:0000269" key="5">
    <source>
    </source>
</evidence>
<protein>
    <recommendedName>
        <fullName>Arf-GAP domain and FG repeat-containing protein 1</fullName>
    </recommendedName>
    <alternativeName>
        <fullName>HIV-1 Rev-binding protein homolog</fullName>
    </alternativeName>
    <alternativeName>
        <fullName>Nucleoporin-like protein RIP</fullName>
    </alternativeName>
</protein>
<sequence length="561" mass="58170">MAASAKRKQEEKHLKMLRDMTGLPHNRKCFDCDQRGPTYVNMTVGSFVCTSCSGSLRGLNPPHRVKSISMTTFTQQEIEFLQKHGNEVCKQIWLGLFDDRSSAIPDFRDPQKVKEFLQEKYEKKRWYVPPEQAKVVASVHASISGSSASSTSSTPEVKPLKSLLGESAPALHLNKGTPTQSPVVGRSQGQQQEKKQFDLLSDLGSDIFAAPAPQSTATANFANFAHFNSHAAQNSANAEFANFDAFGQSSGSSNFGGFPTASHSPFQPQTTGGSAGSVNANFAHFDNFPKSSSADFGSFSTSQSHQTASTVSKVSTNKAGLQTADKYAALANLDNIFSAGQGGDQGSGFGTTGKAPVGSVVSVPSHSSASSDKYAALAELDSVFSSAATSNNAYTSTSNASSSVFGTVPVGASPQTQPASSGPAPFGATPSTNPFVAATGPSAASSTNPFQTNARGATAATFGTASMSMPAGFGTPAQYSLPTSFSGSFQQPPFPAQAAFPQQTAFSQQPNGAGFATFGQTKPVVTPFGQVAAAGVSSNPFMTGAPTGQFPTGSSSTNPFL</sequence>
<proteinExistence type="evidence at protein level"/>
<feature type="chain" id="PRO_0000227908" description="Arf-GAP domain and FG repeat-containing protein 1">
    <location>
        <begin position="1"/>
        <end position="561"/>
    </location>
</feature>
<feature type="domain" description="Arf-GAP" evidence="3">
    <location>
        <begin position="11"/>
        <end position="135"/>
    </location>
</feature>
<feature type="zinc finger region" description="C4-type" evidence="3">
    <location>
        <begin position="29"/>
        <end position="52"/>
    </location>
</feature>
<feature type="region of interest" description="Disordered" evidence="4">
    <location>
        <begin position="171"/>
        <end position="193"/>
    </location>
</feature>
<feature type="region of interest" description="Disordered" evidence="4">
    <location>
        <begin position="409"/>
        <end position="451"/>
    </location>
</feature>
<feature type="compositionally biased region" description="Polar residues" evidence="4">
    <location>
        <begin position="176"/>
        <end position="191"/>
    </location>
</feature>
<feature type="compositionally biased region" description="Polar residues" evidence="4">
    <location>
        <begin position="442"/>
        <end position="451"/>
    </location>
</feature>
<feature type="modified residue" description="Phosphoserine" evidence="2">
    <location>
        <position position="167"/>
    </location>
</feature>
<feature type="modified residue" description="Phosphothreonine" evidence="2">
    <location>
        <position position="177"/>
    </location>
</feature>
<feature type="modified residue" description="Phosphoserine" evidence="2">
    <location>
        <position position="181"/>
    </location>
</feature>
<feature type="modified residue" description="Phosphoserine" evidence="2">
    <location>
        <position position="362"/>
    </location>
</feature>
<feature type="glycosylation site" description="O-linked (GlcNAc) serine" evidence="5">
    <location>
        <position position="367"/>
    </location>
</feature>
<comment type="function">
    <text evidence="1">Required for vesicle docking or fusion during acrosome biogenesis. May play a role in RNA trafficking or localization (By similarity).</text>
</comment>
<comment type="subunit">
    <text evidence="1">Interacts with EPS15R and EPS15. Interacts with FCHO1 (By similarity).</text>
</comment>
<comment type="subcellular location">
    <subcellularLocation>
        <location evidence="2">Nucleus</location>
    </subcellularLocation>
    <subcellularLocation>
        <location evidence="2">Cytoplasmic vesicle</location>
    </subcellularLocation>
</comment>
<comment type="domain">
    <text>Contains FG repeats.</text>
</comment>
<comment type="PTM">
    <text evidence="5">O-glycosylated.</text>
</comment>
<accession>Q4KLH5</accession>
<reference key="1">
    <citation type="journal article" date="2004" name="Genome Res.">
        <title>The status, quality, and expansion of the NIH full-length cDNA project: the Mammalian Gene Collection (MGC).</title>
        <authorList>
            <consortium name="The MGC Project Team"/>
        </authorList>
    </citation>
    <scope>NUCLEOTIDE SEQUENCE [LARGE SCALE MRNA]</scope>
    <source>
        <tissue>Thymus</tissue>
    </source>
</reference>
<reference key="2">
    <citation type="journal article" date="2004" name="Proc. Natl. Acad. Sci. U.S.A.">
        <title>Exploring the O-GlcNAc proteome: direct identification of O-GlcNAc-modified proteins from the brain.</title>
        <authorList>
            <person name="Khidekel N."/>
            <person name="Ficarro S.B."/>
            <person name="Peters E.C."/>
            <person name="Hsieh-Wilson L.C."/>
        </authorList>
    </citation>
    <scope>PROTEIN SEQUENCE OF 355-373</scope>
    <scope>GLYCOSYLATION AT SER-367</scope>
    <scope>IDENTIFICATION BY MASS SPECTROMETRY</scope>
    <source>
        <tissue>Brain</tissue>
    </source>
</reference>
<reference key="3">
    <citation type="journal article" date="2012" name="Nat. Commun.">
        <title>Quantitative maps of protein phosphorylation sites across 14 different rat organs and tissues.</title>
        <authorList>
            <person name="Lundby A."/>
            <person name="Secher A."/>
            <person name="Lage K."/>
            <person name="Nordsborg N.B."/>
            <person name="Dmytriyev A."/>
            <person name="Lundby C."/>
            <person name="Olsen J.V."/>
        </authorList>
    </citation>
    <scope>IDENTIFICATION BY MASS SPECTROMETRY [LARGE SCALE ANALYSIS]</scope>
</reference>
<name>AGFG1_RAT</name>
<organism>
    <name type="scientific">Rattus norvegicus</name>
    <name type="common">Rat</name>
    <dbReference type="NCBI Taxonomy" id="10116"/>
    <lineage>
        <taxon>Eukaryota</taxon>
        <taxon>Metazoa</taxon>
        <taxon>Chordata</taxon>
        <taxon>Craniata</taxon>
        <taxon>Vertebrata</taxon>
        <taxon>Euteleostomi</taxon>
        <taxon>Mammalia</taxon>
        <taxon>Eutheria</taxon>
        <taxon>Euarchontoglires</taxon>
        <taxon>Glires</taxon>
        <taxon>Rodentia</taxon>
        <taxon>Myomorpha</taxon>
        <taxon>Muroidea</taxon>
        <taxon>Muridae</taxon>
        <taxon>Murinae</taxon>
        <taxon>Rattus</taxon>
    </lineage>
</organism>